<evidence type="ECO:0000255" key="1">
    <source>
        <dbReference type="HAMAP-Rule" id="MF_00812"/>
    </source>
</evidence>
<comment type="catalytic activity">
    <reaction evidence="1">
        <text>S-adenosyl-L-methionine + a thiopurine = S-adenosyl-L-homocysteine + a thiopurine S-methylether.</text>
        <dbReference type="EC" id="2.1.1.67"/>
    </reaction>
</comment>
<comment type="subcellular location">
    <subcellularLocation>
        <location evidence="1">Cytoplasm</location>
    </subcellularLocation>
</comment>
<comment type="similarity">
    <text evidence="1">Belongs to the class I-like SAM-binding methyltransferase superfamily. TPMT family.</text>
</comment>
<reference key="1">
    <citation type="submission" date="2006-08" db="EMBL/GenBank/DDBJ databases">
        <title>Complete sequence of Shewanella sp. MR-4.</title>
        <authorList>
            <consortium name="US DOE Joint Genome Institute"/>
            <person name="Copeland A."/>
            <person name="Lucas S."/>
            <person name="Lapidus A."/>
            <person name="Barry K."/>
            <person name="Detter J.C."/>
            <person name="Glavina del Rio T."/>
            <person name="Hammon N."/>
            <person name="Israni S."/>
            <person name="Dalin E."/>
            <person name="Tice H."/>
            <person name="Pitluck S."/>
            <person name="Kiss H."/>
            <person name="Brettin T."/>
            <person name="Bruce D."/>
            <person name="Han C."/>
            <person name="Tapia R."/>
            <person name="Gilna P."/>
            <person name="Schmutz J."/>
            <person name="Larimer F."/>
            <person name="Land M."/>
            <person name="Hauser L."/>
            <person name="Kyrpides N."/>
            <person name="Mikhailova N."/>
            <person name="Nealson K."/>
            <person name="Konstantinidis K."/>
            <person name="Klappenbach J."/>
            <person name="Tiedje J."/>
            <person name="Richardson P."/>
        </authorList>
    </citation>
    <scope>NUCLEOTIDE SEQUENCE [LARGE SCALE GENOMIC DNA]</scope>
    <source>
        <strain>MR-4</strain>
    </source>
</reference>
<dbReference type="EC" id="2.1.1.67" evidence="1"/>
<dbReference type="EMBL" id="CP000446">
    <property type="protein sequence ID" value="ABI37661.1"/>
    <property type="molecule type" value="Genomic_DNA"/>
</dbReference>
<dbReference type="RefSeq" id="WP_011621383.1">
    <property type="nucleotide sequence ID" value="NC_008321.1"/>
</dbReference>
<dbReference type="SMR" id="Q0HMQ6"/>
<dbReference type="KEGG" id="she:Shewmr4_0581"/>
<dbReference type="HOGENOM" id="CLU_085515_1_0_6"/>
<dbReference type="GO" id="GO:0005737">
    <property type="term" value="C:cytoplasm"/>
    <property type="evidence" value="ECO:0007669"/>
    <property type="project" value="UniProtKB-SubCell"/>
</dbReference>
<dbReference type="GO" id="GO:0008119">
    <property type="term" value="F:thiopurine S-methyltransferase activity"/>
    <property type="evidence" value="ECO:0007669"/>
    <property type="project" value="UniProtKB-UniRule"/>
</dbReference>
<dbReference type="GO" id="GO:0032259">
    <property type="term" value="P:methylation"/>
    <property type="evidence" value="ECO:0007669"/>
    <property type="project" value="UniProtKB-KW"/>
</dbReference>
<dbReference type="GO" id="GO:0010038">
    <property type="term" value="P:response to metal ion"/>
    <property type="evidence" value="ECO:0007669"/>
    <property type="project" value="InterPro"/>
</dbReference>
<dbReference type="CDD" id="cd02440">
    <property type="entry name" value="AdoMet_MTases"/>
    <property type="match status" value="1"/>
</dbReference>
<dbReference type="FunFam" id="3.40.50.150:FF:000101">
    <property type="entry name" value="Thiopurine S-methyltransferase"/>
    <property type="match status" value="1"/>
</dbReference>
<dbReference type="Gene3D" id="3.40.50.150">
    <property type="entry name" value="Vaccinia Virus protein VP39"/>
    <property type="match status" value="1"/>
</dbReference>
<dbReference type="HAMAP" id="MF_00812">
    <property type="entry name" value="Thiopur_methtran"/>
    <property type="match status" value="1"/>
</dbReference>
<dbReference type="InterPro" id="IPR029063">
    <property type="entry name" value="SAM-dependent_MTases_sf"/>
</dbReference>
<dbReference type="InterPro" id="IPR022474">
    <property type="entry name" value="Thiopur_S-MeTfrase_Se/Te_detox"/>
</dbReference>
<dbReference type="InterPro" id="IPR025835">
    <property type="entry name" value="Thiopurine_S-MeTrfase"/>
</dbReference>
<dbReference type="InterPro" id="IPR008854">
    <property type="entry name" value="TPMT"/>
</dbReference>
<dbReference type="NCBIfam" id="NF009732">
    <property type="entry name" value="PRK13255.1"/>
    <property type="match status" value="1"/>
</dbReference>
<dbReference type="NCBIfam" id="TIGR03840">
    <property type="entry name" value="TMPT_Se_Te"/>
    <property type="match status" value="1"/>
</dbReference>
<dbReference type="PANTHER" id="PTHR10259">
    <property type="entry name" value="THIOPURINE S-METHYLTRANSFERASE"/>
    <property type="match status" value="1"/>
</dbReference>
<dbReference type="PANTHER" id="PTHR10259:SF11">
    <property type="entry name" value="THIOPURINE S-METHYLTRANSFERASE"/>
    <property type="match status" value="1"/>
</dbReference>
<dbReference type="Pfam" id="PF05724">
    <property type="entry name" value="TPMT"/>
    <property type="match status" value="1"/>
</dbReference>
<dbReference type="PIRSF" id="PIRSF023956">
    <property type="entry name" value="Thiopurine_S-methyltransferase"/>
    <property type="match status" value="1"/>
</dbReference>
<dbReference type="SUPFAM" id="SSF53335">
    <property type="entry name" value="S-adenosyl-L-methionine-dependent methyltransferases"/>
    <property type="match status" value="1"/>
</dbReference>
<dbReference type="PROSITE" id="PS51585">
    <property type="entry name" value="SAM_MT_TPMT"/>
    <property type="match status" value="1"/>
</dbReference>
<accession>Q0HMQ6</accession>
<name>TPMT_SHESM</name>
<protein>
    <recommendedName>
        <fullName evidence="1">Thiopurine S-methyltransferase</fullName>
        <ecNumber evidence="1">2.1.1.67</ecNumber>
    </recommendedName>
    <alternativeName>
        <fullName evidence="1">Thiopurine methyltransferase</fullName>
    </alternativeName>
</protein>
<keyword id="KW-0963">Cytoplasm</keyword>
<keyword id="KW-0489">Methyltransferase</keyword>
<keyword id="KW-0949">S-adenosyl-L-methionine</keyword>
<keyword id="KW-0808">Transferase</keyword>
<gene>
    <name evidence="1" type="primary">tpm</name>
    <name type="ordered locus">Shewmr4_0581</name>
</gene>
<organism>
    <name type="scientific">Shewanella sp. (strain MR-4)</name>
    <dbReference type="NCBI Taxonomy" id="60480"/>
    <lineage>
        <taxon>Bacteria</taxon>
        <taxon>Pseudomonadati</taxon>
        <taxon>Pseudomonadota</taxon>
        <taxon>Gammaproteobacteria</taxon>
        <taxon>Alteromonadales</taxon>
        <taxon>Shewanellaceae</taxon>
        <taxon>Shewanella</taxon>
    </lineage>
</organism>
<proteinExistence type="inferred from homology"/>
<sequence>MEPGFWHEKWQQQLIGFHQQDINPFLVKYWQTLALPADAKVFVPLCGKSLDMCFLAEQGHQVIGCELNELAVQQFFEENQLPMNQSAEGEHQHYQTEQVSLYQGDIFTLPQSITAQVNGFYDRAALIAWPESMRTQYAKQLAQLLPSGSVGLLVTLDYPQETLSGPPFAVSPTWVETHLSDDFEIQALACQDVLADNPRFVKKEVPWLNEAVYLLRRK</sequence>
<feature type="chain" id="PRO_1000047224" description="Thiopurine S-methyltransferase">
    <location>
        <begin position="1"/>
        <end position="218"/>
    </location>
</feature>
<feature type="binding site" evidence="1">
    <location>
        <position position="10"/>
    </location>
    <ligand>
        <name>S-adenosyl-L-methionine</name>
        <dbReference type="ChEBI" id="CHEBI:59789"/>
    </ligand>
</feature>
<feature type="binding site" evidence="1">
    <location>
        <position position="45"/>
    </location>
    <ligand>
        <name>S-adenosyl-L-methionine</name>
        <dbReference type="ChEBI" id="CHEBI:59789"/>
    </ligand>
</feature>
<feature type="binding site" evidence="1">
    <location>
        <position position="66"/>
    </location>
    <ligand>
        <name>S-adenosyl-L-methionine</name>
        <dbReference type="ChEBI" id="CHEBI:59789"/>
    </ligand>
</feature>
<feature type="binding site" evidence="1">
    <location>
        <position position="123"/>
    </location>
    <ligand>
        <name>S-adenosyl-L-methionine</name>
        <dbReference type="ChEBI" id="CHEBI:59789"/>
    </ligand>
</feature>